<protein>
    <recommendedName>
        <fullName>Spermatogenesis-defective protein 39</fullName>
        <shortName>SPE-39</shortName>
    </recommendedName>
    <alternativeName>
        <fullName>VPS33B-interacting protein in polarity and apical restriction</fullName>
    </alternativeName>
</protein>
<keyword id="KW-0963">Cytoplasm</keyword>
<keyword id="KW-0968">Cytoplasmic vesicle</keyword>
<keyword id="KW-0221">Differentiation</keyword>
<keyword id="KW-0967">Endosome</keyword>
<keyword id="KW-0653">Protein transport</keyword>
<keyword id="KW-1185">Reference proteome</keyword>
<keyword id="KW-0744">Spermatogenesis</keyword>
<keyword id="KW-0804">Transcription</keyword>
<keyword id="KW-0805">Transcription regulation</keyword>
<keyword id="KW-0813">Transport</keyword>
<comment type="function">
    <text evidence="2 4 5">Proposed to be involved in endosomal maturation implicating in part vps-33.2. May play a role in epithelial polarization through stabilization of apical membrane protein content. May play a role in transcriptional regulation (By similarity). Plays a role in lysosomal trafficking, probably via association with the core HOPS complex in a discrete population of endosomes. Essential for vesicular trafficking during spermatogenesis; required during spermiogenesis or sperm activation for the morphogenesis of specialized Golgi-derived fibrous body-membranous organelle (FB-MO) complexes. Required for the processing of internalized proteins in oocytes and coelomocytes.</text>
</comment>
<comment type="subunit">
    <text evidence="2 5">Interacts with vps-33.1 and vps-33.2 (PubMed:19109425). Associates with the homotypic fusion and vacuole protein sorting (HOPS) complex, impaired by vps-33.2 (By similarity).</text>
</comment>
<comment type="subcellular location">
    <subcellularLocation>
        <location evidence="4">Cytoplasm</location>
    </subcellularLocation>
    <subcellularLocation>
        <location evidence="1">Cytoplasmic vesicle</location>
    </subcellularLocation>
    <subcellularLocation>
        <location evidence="2">Early endosome</location>
    </subcellularLocation>
    <subcellularLocation>
        <location evidence="2">Recycling endosome</location>
    </subcellularLocation>
    <subcellularLocation>
        <location evidence="2">Late endosome</location>
    </subcellularLocation>
    <text evidence="4">Localizes in both residual bodies and budding spermatids (PubMed:14504223).</text>
</comment>
<comment type="tissue specificity">
    <text>Expressed in spermatocytes and spermatids (at protein level).</text>
</comment>
<comment type="developmental stage">
    <text>Expressed in the embryonic testis.</text>
</comment>
<comment type="disruption phenotype">
    <text evidence="4 5">Mutants produce spermatocytes that complete meiosis but do not usually form functional. Show defective vesicular biogenesis during spermatogenesis with morphogenesis failure of the specialized Golgi-derived fibrous body-membranous organelle (FB-MO) complexes. Show disrupted processing of endocytosed proteins in oocytes and coelomocytes.</text>
</comment>
<comment type="similarity">
    <text evidence="6">Belongs to the SPE39 family.</text>
</comment>
<reference key="1">
    <citation type="journal article" date="1998" name="Science">
        <title>Genome sequence of the nematode C. elegans: a platform for investigating biology.</title>
        <authorList>
            <consortium name="The C. elegans sequencing consortium"/>
        </authorList>
    </citation>
    <scope>NUCLEOTIDE SEQUENCE [LARGE SCALE GENOMIC DNA]</scope>
    <source>
        <strain>Bristol N2</strain>
    </source>
</reference>
<reference key="2">
    <citation type="journal article" date="2003" name="Genetics">
        <title>The Caenorhabditis elegans spe-39 gene is required for intracellular membrane reorganization during spermatogenesis.</title>
        <authorList>
            <person name="Zhu G.D."/>
            <person name="L'Hernault S.W."/>
        </authorList>
    </citation>
    <scope>FUNCTION</scope>
    <scope>SUBCELLULAR LOCATION</scope>
    <scope>DISRUPTION PHENOTYPE</scope>
</reference>
<reference key="3">
    <citation type="journal article" date="2009" name="Mol. Biol. Cell">
        <title>SPE-39 family proteins interact with the HOPS complex and function in lysosomal delivery.</title>
        <authorList>
            <person name="Zhu G.D."/>
            <person name="Salazar G."/>
            <person name="Zlatic S.A."/>
            <person name="Fiza B."/>
            <person name="Doucette M.M."/>
            <person name="Heilman C.J."/>
            <person name="Levey A.I."/>
            <person name="Faundez V."/>
            <person name="L'hernault S.W."/>
        </authorList>
    </citation>
    <scope>DISRUPTION PHENOTYPE</scope>
    <scope>FUNCTION</scope>
    <scope>INTERACTION WITH VPS-33.1 AND VPS-33.2</scope>
</reference>
<dbReference type="EMBL" id="FO081573">
    <property type="protein sequence ID" value="CCD72490.1"/>
    <property type="molecule type" value="Genomic_DNA"/>
</dbReference>
<dbReference type="PIR" id="T29370">
    <property type="entry name" value="T29370"/>
</dbReference>
<dbReference type="RefSeq" id="NP_504718.1">
    <property type="nucleotide sequence ID" value="NM_072317.8"/>
</dbReference>
<dbReference type="BioGRID" id="44116">
    <property type="interactions" value="4"/>
</dbReference>
<dbReference type="FunCoup" id="Q23288">
    <property type="interactions" value="3053"/>
</dbReference>
<dbReference type="IntAct" id="Q23288">
    <property type="interactions" value="2"/>
</dbReference>
<dbReference type="STRING" id="6239.ZC404.3a.2"/>
<dbReference type="PaxDb" id="6239-ZC404.3a"/>
<dbReference type="EnsemblMetazoa" id="ZC404.3a.1">
    <property type="protein sequence ID" value="ZC404.3a.1"/>
    <property type="gene ID" value="WBGene00004975"/>
</dbReference>
<dbReference type="GeneID" id="179071"/>
<dbReference type="KEGG" id="cel:CELE_ZC404.3"/>
<dbReference type="UCSC" id="ZC404.3a">
    <property type="organism name" value="c. elegans"/>
</dbReference>
<dbReference type="AGR" id="WB:WBGene00004975"/>
<dbReference type="CTD" id="179071"/>
<dbReference type="WormBase" id="ZC404.3a">
    <property type="protein sequence ID" value="CE07594"/>
    <property type="gene ID" value="WBGene00004975"/>
    <property type="gene designation" value="spe-39"/>
</dbReference>
<dbReference type="eggNOG" id="KOG4677">
    <property type="taxonomic scope" value="Eukaryota"/>
</dbReference>
<dbReference type="GeneTree" id="ENSGT00390000013955"/>
<dbReference type="HOGENOM" id="CLU_491120_0_0_1"/>
<dbReference type="InParanoid" id="Q23288"/>
<dbReference type="OMA" id="PEMVIEC"/>
<dbReference type="OrthoDB" id="9977282at2759"/>
<dbReference type="PhylomeDB" id="Q23288"/>
<dbReference type="PRO" id="PR:Q23288"/>
<dbReference type="Proteomes" id="UP000001940">
    <property type="component" value="Chromosome V"/>
</dbReference>
<dbReference type="Bgee" id="WBGene00004975">
    <property type="expression patterns" value="Expressed in germ line (C elegans) and 4 other cell types or tissues"/>
</dbReference>
<dbReference type="ExpressionAtlas" id="Q23288">
    <property type="expression patterns" value="baseline and differential"/>
</dbReference>
<dbReference type="GO" id="GO:0005737">
    <property type="term" value="C:cytoplasm"/>
    <property type="evidence" value="ECO:0000314"/>
    <property type="project" value="WormBase"/>
</dbReference>
<dbReference type="GO" id="GO:0005769">
    <property type="term" value="C:early endosome"/>
    <property type="evidence" value="ECO:0007669"/>
    <property type="project" value="UniProtKB-SubCell"/>
</dbReference>
<dbReference type="GO" id="GO:0005770">
    <property type="term" value="C:late endosome"/>
    <property type="evidence" value="ECO:0007669"/>
    <property type="project" value="UniProtKB-SubCell"/>
</dbReference>
<dbReference type="GO" id="GO:0055037">
    <property type="term" value="C:recycling endosome"/>
    <property type="evidence" value="ECO:0007669"/>
    <property type="project" value="UniProtKB-SubCell"/>
</dbReference>
<dbReference type="GO" id="GO:0005773">
    <property type="term" value="C:vacuole"/>
    <property type="evidence" value="ECO:0007669"/>
    <property type="project" value="GOC"/>
</dbReference>
<dbReference type="GO" id="GO:0006886">
    <property type="term" value="P:intracellular protein transport"/>
    <property type="evidence" value="ECO:0000318"/>
    <property type="project" value="GO_Central"/>
</dbReference>
<dbReference type="GO" id="GO:0048477">
    <property type="term" value="P:oogenesis"/>
    <property type="evidence" value="ECO:0000315"/>
    <property type="project" value="WormBase"/>
</dbReference>
<dbReference type="GO" id="GO:0007286">
    <property type="term" value="P:spermatid development"/>
    <property type="evidence" value="ECO:0000315"/>
    <property type="project" value="WormBase"/>
</dbReference>
<dbReference type="GO" id="GO:0006624">
    <property type="term" value="P:vacuolar protein processing"/>
    <property type="evidence" value="ECO:0000315"/>
    <property type="project" value="WormBase"/>
</dbReference>
<dbReference type="GO" id="GO:0007034">
    <property type="term" value="P:vacuolar transport"/>
    <property type="evidence" value="ECO:0000315"/>
    <property type="project" value="WormBase"/>
</dbReference>
<dbReference type="InterPro" id="IPR040057">
    <property type="entry name" value="Spe-39"/>
</dbReference>
<dbReference type="PANTHER" id="PTHR13364">
    <property type="entry name" value="DEFECTIVE SPERMATOGENESIS PROTEIN 39"/>
    <property type="match status" value="1"/>
</dbReference>
<dbReference type="PANTHER" id="PTHR13364:SF6">
    <property type="entry name" value="SPERMATOGENESIS-DEFECTIVE PROTEIN 39 HOMOLOG"/>
    <property type="match status" value="1"/>
</dbReference>
<feature type="chain" id="PRO_0000395737" description="Spermatogenesis-defective protein 39">
    <location>
        <begin position="1"/>
        <end position="522"/>
    </location>
</feature>
<feature type="region of interest" description="Disordered" evidence="3">
    <location>
        <begin position="47"/>
        <end position="68"/>
    </location>
</feature>
<evidence type="ECO:0000250" key="1"/>
<evidence type="ECO:0000250" key="2">
    <source>
        <dbReference type="UniProtKB" id="Q9H9C1"/>
    </source>
</evidence>
<evidence type="ECO:0000256" key="3">
    <source>
        <dbReference type="SAM" id="MobiDB-lite"/>
    </source>
</evidence>
<evidence type="ECO:0000269" key="4">
    <source>
    </source>
</evidence>
<evidence type="ECO:0000269" key="5">
    <source>
    </source>
</evidence>
<evidence type="ECO:0000305" key="6"/>
<name>SPE39_CAEEL</name>
<organism>
    <name type="scientific">Caenorhabditis elegans</name>
    <dbReference type="NCBI Taxonomy" id="6239"/>
    <lineage>
        <taxon>Eukaryota</taxon>
        <taxon>Metazoa</taxon>
        <taxon>Ecdysozoa</taxon>
        <taxon>Nematoda</taxon>
        <taxon>Chromadorea</taxon>
        <taxon>Rhabditida</taxon>
        <taxon>Rhabditina</taxon>
        <taxon>Rhabditomorpha</taxon>
        <taxon>Rhabditoidea</taxon>
        <taxon>Rhabditidae</taxon>
        <taxon>Peloderinae</taxon>
        <taxon>Caenorhabditis</taxon>
    </lineage>
</organism>
<sequence length="522" mass="59507">MALRRKFTFELPEDSYWNESDSNSSGLFDDLQSKQLQARAAVDNLFGGDETPKPYVRPQNPTPTPTNVPLQIDGRAAAVSDKANIRITDTSPRASGKIVDDFLNMKFAENVNVAPVIQTAPSVVSEASASSLPSEAQRLDLDYNRLRQEHRKLKDQHEVLRHERFQPLTIEASIKRMLQGHTVTLDYYRSLRDKTQLLKQAVATYDNNTIFKIVIFLERTLKENIFCKIMDGQKSACRVYTRHLQITGEWDKMNKFLRSIGQYQHASVIEFEATRKYKRNPDKRVPLLRTMLHGSFSIPEMKFEARQMEALMRNYEIQLQMEKMDAGDKGEHFRKFPKTSSLIGLPALSSLYYSAMYHYDDSPTSAASLPSVQTLIRFNDRLATQTIVSALTRLSRWPDIDKLLQPKTITMTFSAAKSVFKGKKSTSKWGVSINNHNLLTIVKRSHPSPPTDFIYRILKGESDAQERLRLALLFDVPEMVIECLTQKGDRLSLASYAKSLKTNSVESFKAVAALNNPSIKWK</sequence>
<gene>
    <name type="primary">spe-39</name>
    <name type="synonym">vipar</name>
    <name type="ORF">ZC404.3</name>
</gene>
<accession>Q23288</accession>
<proteinExistence type="evidence at protein level"/>